<feature type="chain" id="PRO_1000165582" description="Small ribosomal subunit protein uS11">
    <location>
        <begin position="1"/>
        <end position="128"/>
    </location>
</feature>
<sequence>MKKVKTVGKSKKEFITGVVHIRATFNNTFVNVTDVHGNTLCQTSVGACGFSGSRKSTPYAAGKAAEAAAKNAIERFGMKVVSVIIRGPGFGTEAAVKALQSCGLTVTSIADKTAIPHNGCRLRKKRRV</sequence>
<gene>
    <name evidence="1" type="primary">rpsK</name>
    <name type="ordered locus">WRi_004970</name>
</gene>
<dbReference type="EMBL" id="CP001391">
    <property type="protein sequence ID" value="ACN95279.1"/>
    <property type="molecule type" value="Genomic_DNA"/>
</dbReference>
<dbReference type="RefSeq" id="WP_012673179.1">
    <property type="nucleotide sequence ID" value="NZ_MKIF01000201.1"/>
</dbReference>
<dbReference type="SMR" id="C0R2Y7"/>
<dbReference type="STRING" id="66084.WRi_004970"/>
<dbReference type="KEGG" id="wri:WRi_004970"/>
<dbReference type="HOGENOM" id="CLU_072439_5_0_5"/>
<dbReference type="Proteomes" id="UP000001293">
    <property type="component" value="Chromosome"/>
</dbReference>
<dbReference type="GO" id="GO:1990904">
    <property type="term" value="C:ribonucleoprotein complex"/>
    <property type="evidence" value="ECO:0007669"/>
    <property type="project" value="UniProtKB-KW"/>
</dbReference>
<dbReference type="GO" id="GO:0005840">
    <property type="term" value="C:ribosome"/>
    <property type="evidence" value="ECO:0007669"/>
    <property type="project" value="UniProtKB-KW"/>
</dbReference>
<dbReference type="GO" id="GO:0019843">
    <property type="term" value="F:rRNA binding"/>
    <property type="evidence" value="ECO:0007669"/>
    <property type="project" value="UniProtKB-UniRule"/>
</dbReference>
<dbReference type="GO" id="GO:0003735">
    <property type="term" value="F:structural constituent of ribosome"/>
    <property type="evidence" value="ECO:0007669"/>
    <property type="project" value="InterPro"/>
</dbReference>
<dbReference type="GO" id="GO:0006412">
    <property type="term" value="P:translation"/>
    <property type="evidence" value="ECO:0007669"/>
    <property type="project" value="UniProtKB-UniRule"/>
</dbReference>
<dbReference type="Gene3D" id="3.30.420.80">
    <property type="entry name" value="Ribosomal protein S11"/>
    <property type="match status" value="1"/>
</dbReference>
<dbReference type="HAMAP" id="MF_01310">
    <property type="entry name" value="Ribosomal_uS11"/>
    <property type="match status" value="1"/>
</dbReference>
<dbReference type="InterPro" id="IPR001971">
    <property type="entry name" value="Ribosomal_uS11"/>
</dbReference>
<dbReference type="InterPro" id="IPR019981">
    <property type="entry name" value="Ribosomal_uS11_bac-type"/>
</dbReference>
<dbReference type="InterPro" id="IPR036967">
    <property type="entry name" value="Ribosomal_uS11_sf"/>
</dbReference>
<dbReference type="NCBIfam" id="NF003698">
    <property type="entry name" value="PRK05309.1"/>
    <property type="match status" value="1"/>
</dbReference>
<dbReference type="NCBIfam" id="TIGR03632">
    <property type="entry name" value="uS11_bact"/>
    <property type="match status" value="1"/>
</dbReference>
<dbReference type="PANTHER" id="PTHR11759">
    <property type="entry name" value="40S RIBOSOMAL PROTEIN S14/30S RIBOSOMAL PROTEIN S11"/>
    <property type="match status" value="1"/>
</dbReference>
<dbReference type="Pfam" id="PF00411">
    <property type="entry name" value="Ribosomal_S11"/>
    <property type="match status" value="1"/>
</dbReference>
<dbReference type="PIRSF" id="PIRSF002131">
    <property type="entry name" value="Ribosomal_S11"/>
    <property type="match status" value="1"/>
</dbReference>
<dbReference type="SUPFAM" id="SSF53137">
    <property type="entry name" value="Translational machinery components"/>
    <property type="match status" value="1"/>
</dbReference>
<organism>
    <name type="scientific">Wolbachia sp. subsp. Drosophila simulans (strain wRi)</name>
    <dbReference type="NCBI Taxonomy" id="66084"/>
    <lineage>
        <taxon>Bacteria</taxon>
        <taxon>Pseudomonadati</taxon>
        <taxon>Pseudomonadota</taxon>
        <taxon>Alphaproteobacteria</taxon>
        <taxon>Rickettsiales</taxon>
        <taxon>Anaplasmataceae</taxon>
        <taxon>Wolbachieae</taxon>
        <taxon>Wolbachia</taxon>
    </lineage>
</organism>
<keyword id="KW-0687">Ribonucleoprotein</keyword>
<keyword id="KW-0689">Ribosomal protein</keyword>
<keyword id="KW-0694">RNA-binding</keyword>
<keyword id="KW-0699">rRNA-binding</keyword>
<evidence type="ECO:0000255" key="1">
    <source>
        <dbReference type="HAMAP-Rule" id="MF_01310"/>
    </source>
</evidence>
<evidence type="ECO:0000305" key="2"/>
<accession>C0R2Y7</accession>
<reference key="1">
    <citation type="journal article" date="2009" name="Proc. Natl. Acad. Sci. U.S.A.">
        <title>The mosaic genome structure of the Wolbachia wRi strain infecting Drosophila simulans.</title>
        <authorList>
            <person name="Klasson L."/>
            <person name="Westberg J."/>
            <person name="Sapountzis P."/>
            <person name="Naeslund K."/>
            <person name="Lutnaes Y."/>
            <person name="Darby A.C."/>
            <person name="Veneti Z."/>
            <person name="Chen L."/>
            <person name="Braig H.R."/>
            <person name="Garrett R."/>
            <person name="Bourtzis K."/>
            <person name="Andersson S.G."/>
        </authorList>
    </citation>
    <scope>NUCLEOTIDE SEQUENCE [LARGE SCALE GENOMIC DNA]</scope>
    <source>
        <strain>wRi</strain>
    </source>
</reference>
<name>RS11_WOLWR</name>
<proteinExistence type="inferred from homology"/>
<comment type="function">
    <text evidence="1">Located on the platform of the 30S subunit, it bridges several disparate RNA helices of the 16S rRNA. Forms part of the Shine-Dalgarno cleft in the 70S ribosome.</text>
</comment>
<comment type="subunit">
    <text evidence="1">Part of the 30S ribosomal subunit. Interacts with proteins S7 and S18. Binds to IF-3.</text>
</comment>
<comment type="similarity">
    <text evidence="1">Belongs to the universal ribosomal protein uS11 family.</text>
</comment>
<protein>
    <recommendedName>
        <fullName evidence="1">Small ribosomal subunit protein uS11</fullName>
    </recommendedName>
    <alternativeName>
        <fullName evidence="2">30S ribosomal protein S11</fullName>
    </alternativeName>
</protein>